<proteinExistence type="inferred from homology"/>
<evidence type="ECO:0000255" key="1">
    <source>
        <dbReference type="HAMAP-Rule" id="MF_00014"/>
    </source>
</evidence>
<evidence type="ECO:0000305" key="2"/>
<accession>A5I4M4</accession>
<accession>A7G5S3</accession>
<keyword id="KW-0143">Chaperone</keyword>
<keyword id="KW-0963">Cytoplasm</keyword>
<keyword id="KW-1185">Reference proteome</keyword>
<keyword id="KW-0690">Ribosome biogenesis</keyword>
<keyword id="KW-0698">rRNA processing</keyword>
<protein>
    <recommendedName>
        <fullName evidence="1">Ribosome maturation factor RimM</fullName>
    </recommendedName>
</protein>
<comment type="function">
    <text evidence="1">An accessory protein needed during the final step in the assembly of 30S ribosomal subunit, possibly for assembly of the head region. Essential for efficient processing of 16S rRNA. May be needed both before and after RbfA during the maturation of 16S rRNA. It has affinity for free ribosomal 30S subunits but not for 70S ribosomes.</text>
</comment>
<comment type="subunit">
    <text evidence="1">Binds ribosomal protein uS19.</text>
</comment>
<comment type="subcellular location">
    <subcellularLocation>
        <location evidence="1">Cytoplasm</location>
    </subcellularLocation>
</comment>
<comment type="domain">
    <text evidence="1">The PRC barrel domain binds ribosomal protein uS19.</text>
</comment>
<comment type="similarity">
    <text evidence="1">Belongs to the RimM family.</text>
</comment>
<organism>
    <name type="scientific">Clostridium botulinum (strain Hall / ATCC 3502 / NCTC 13319 / Type A)</name>
    <dbReference type="NCBI Taxonomy" id="441771"/>
    <lineage>
        <taxon>Bacteria</taxon>
        <taxon>Bacillati</taxon>
        <taxon>Bacillota</taxon>
        <taxon>Clostridia</taxon>
        <taxon>Eubacteriales</taxon>
        <taxon>Clostridiaceae</taxon>
        <taxon>Clostridium</taxon>
    </lineage>
</organism>
<name>RIMM_CLOBH</name>
<feature type="chain" id="PRO_0000351749" description="Ribosome maturation factor RimM">
    <location>
        <begin position="1"/>
        <end position="164"/>
    </location>
</feature>
<feature type="domain" description="PRC barrel" evidence="1">
    <location>
        <begin position="90"/>
        <end position="161"/>
    </location>
</feature>
<feature type="sequence conflict" description="In Ref. 2; ABS36441." evidence="2" ref="2">
    <original>R</original>
    <variation>K</variation>
    <location>
        <position position="45"/>
    </location>
</feature>
<sequence length="164" mass="18706">MKEFLAVGEIINTHGIKGEVKVYPLTDDMKRFKKLKEVFIDGEERKILSCKLQPNNVVLKIEGIDSIEEANKYRKKLLEIKRENSVKLPKGSYFIADLIECRVIDEDGREIGQISDVIKTGSNDVYEVKGKSEVLVPAIKDIVTNIDIENKTVTIKPLEIWQCE</sequence>
<reference key="1">
    <citation type="journal article" date="2007" name="Genome Res.">
        <title>Genome sequence of a proteolytic (Group I) Clostridium botulinum strain Hall A and comparative analysis of the clostridial genomes.</title>
        <authorList>
            <person name="Sebaihia M."/>
            <person name="Peck M.W."/>
            <person name="Minton N.P."/>
            <person name="Thomson N.R."/>
            <person name="Holden M.T.G."/>
            <person name="Mitchell W.J."/>
            <person name="Carter A.T."/>
            <person name="Bentley S.D."/>
            <person name="Mason D.R."/>
            <person name="Crossman L."/>
            <person name="Paul C.J."/>
            <person name="Ivens A."/>
            <person name="Wells-Bennik M.H.J."/>
            <person name="Davis I.J."/>
            <person name="Cerdeno-Tarraga A.M."/>
            <person name="Churcher C."/>
            <person name="Quail M.A."/>
            <person name="Chillingworth T."/>
            <person name="Feltwell T."/>
            <person name="Fraser A."/>
            <person name="Goodhead I."/>
            <person name="Hance Z."/>
            <person name="Jagels K."/>
            <person name="Larke N."/>
            <person name="Maddison M."/>
            <person name="Moule S."/>
            <person name="Mungall K."/>
            <person name="Norbertczak H."/>
            <person name="Rabbinowitsch E."/>
            <person name="Sanders M."/>
            <person name="Simmonds M."/>
            <person name="White B."/>
            <person name="Whithead S."/>
            <person name="Parkhill J."/>
        </authorList>
    </citation>
    <scope>NUCLEOTIDE SEQUENCE [LARGE SCALE GENOMIC DNA]</scope>
    <source>
        <strain>Hall / ATCC 3502 / NCTC 13319 / Type A</strain>
    </source>
</reference>
<reference key="2">
    <citation type="journal article" date="2007" name="PLoS ONE">
        <title>Analysis of the neurotoxin complex genes in Clostridium botulinum A1-A4 and B1 strains: BoNT/A3, /Ba4 and /B1 clusters are located within plasmids.</title>
        <authorList>
            <person name="Smith T.J."/>
            <person name="Hill K.K."/>
            <person name="Foley B.T."/>
            <person name="Detter J.C."/>
            <person name="Munk A.C."/>
            <person name="Bruce D.C."/>
            <person name="Doggett N.A."/>
            <person name="Smith L.A."/>
            <person name="Marks J.D."/>
            <person name="Xie G."/>
            <person name="Brettin T.S."/>
        </authorList>
    </citation>
    <scope>NUCLEOTIDE SEQUENCE [LARGE SCALE GENOMIC DNA]</scope>
    <source>
        <strain>Hall / ATCC 3502 / NCTC 13319 / Type A</strain>
    </source>
</reference>
<dbReference type="EMBL" id="AM412317">
    <property type="protein sequence ID" value="CAL83996.1"/>
    <property type="molecule type" value="Genomic_DNA"/>
</dbReference>
<dbReference type="EMBL" id="CP000727">
    <property type="protein sequence ID" value="ABS36441.1"/>
    <property type="molecule type" value="Genomic_DNA"/>
</dbReference>
<dbReference type="RefSeq" id="YP_001254945.1">
    <property type="nucleotide sequence ID" value="NC_009495.1"/>
</dbReference>
<dbReference type="RefSeq" id="YP_001388138.1">
    <property type="nucleotide sequence ID" value="NC_009698.1"/>
</dbReference>
<dbReference type="SMR" id="A5I4M4"/>
<dbReference type="GeneID" id="5187654"/>
<dbReference type="KEGG" id="cbh:CLC_2294"/>
<dbReference type="KEGG" id="cbo:CBO2446"/>
<dbReference type="PATRIC" id="fig|413999.7.peg.2423"/>
<dbReference type="HOGENOM" id="CLU_077636_3_2_9"/>
<dbReference type="PRO" id="PR:A5I4M4"/>
<dbReference type="Proteomes" id="UP000001986">
    <property type="component" value="Chromosome"/>
</dbReference>
<dbReference type="GO" id="GO:0005829">
    <property type="term" value="C:cytosol"/>
    <property type="evidence" value="ECO:0000318"/>
    <property type="project" value="GO_Central"/>
</dbReference>
<dbReference type="GO" id="GO:0005840">
    <property type="term" value="C:ribosome"/>
    <property type="evidence" value="ECO:0007669"/>
    <property type="project" value="InterPro"/>
</dbReference>
<dbReference type="GO" id="GO:0043022">
    <property type="term" value="F:ribosome binding"/>
    <property type="evidence" value="ECO:0007669"/>
    <property type="project" value="InterPro"/>
</dbReference>
<dbReference type="GO" id="GO:0030490">
    <property type="term" value="P:maturation of SSU-rRNA"/>
    <property type="evidence" value="ECO:0000318"/>
    <property type="project" value="GO_Central"/>
</dbReference>
<dbReference type="Gene3D" id="2.30.30.240">
    <property type="entry name" value="PRC-barrel domain"/>
    <property type="match status" value="1"/>
</dbReference>
<dbReference type="Gene3D" id="2.40.30.60">
    <property type="entry name" value="RimM"/>
    <property type="match status" value="1"/>
</dbReference>
<dbReference type="HAMAP" id="MF_00014">
    <property type="entry name" value="Ribosome_mat_RimM"/>
    <property type="match status" value="1"/>
</dbReference>
<dbReference type="InterPro" id="IPR011033">
    <property type="entry name" value="PRC_barrel-like_sf"/>
</dbReference>
<dbReference type="InterPro" id="IPR056792">
    <property type="entry name" value="PRC_RimM"/>
</dbReference>
<dbReference type="InterPro" id="IPR011961">
    <property type="entry name" value="RimM"/>
</dbReference>
<dbReference type="InterPro" id="IPR002676">
    <property type="entry name" value="RimM_N"/>
</dbReference>
<dbReference type="InterPro" id="IPR036976">
    <property type="entry name" value="RimM_N_sf"/>
</dbReference>
<dbReference type="InterPro" id="IPR009000">
    <property type="entry name" value="Transl_B-barrel_sf"/>
</dbReference>
<dbReference type="NCBIfam" id="TIGR02273">
    <property type="entry name" value="16S_RimM"/>
    <property type="match status" value="1"/>
</dbReference>
<dbReference type="PANTHER" id="PTHR33692">
    <property type="entry name" value="RIBOSOME MATURATION FACTOR RIMM"/>
    <property type="match status" value="1"/>
</dbReference>
<dbReference type="PANTHER" id="PTHR33692:SF1">
    <property type="entry name" value="RIBOSOME MATURATION FACTOR RIMM"/>
    <property type="match status" value="1"/>
</dbReference>
<dbReference type="Pfam" id="PF24986">
    <property type="entry name" value="PRC_RimM"/>
    <property type="match status" value="1"/>
</dbReference>
<dbReference type="Pfam" id="PF01782">
    <property type="entry name" value="RimM"/>
    <property type="match status" value="1"/>
</dbReference>
<dbReference type="SUPFAM" id="SSF50346">
    <property type="entry name" value="PRC-barrel domain"/>
    <property type="match status" value="1"/>
</dbReference>
<dbReference type="SUPFAM" id="SSF50447">
    <property type="entry name" value="Translation proteins"/>
    <property type="match status" value="1"/>
</dbReference>
<gene>
    <name evidence="1" type="primary">rimM</name>
    <name type="ordered locus">CBO2446</name>
    <name type="ordered locus">CLC_2294</name>
</gene>